<protein>
    <recommendedName>
        <fullName>Psi-producing oxygenase A</fullName>
    </recommendedName>
    <alternativeName>
        <fullName>Fatty acid oxygenase ppoA</fullName>
    </alternativeName>
    <domain>
        <recommendedName>
            <fullName>Linoleate 8R-lipoxygenase</fullName>
            <ecNumber>1.13.11.60</ecNumber>
        </recommendedName>
    </domain>
    <domain>
        <recommendedName>
            <fullName>9,12-octadecadienoate 8-hydroperoxide 8R-isomerase</fullName>
            <ecNumber>5.4.4.5</ecNumber>
        </recommendedName>
    </domain>
</protein>
<comment type="function">
    <text evidence="1">Bifunctional heme-containing enzyme that oxidizes linoleic acid to (8R,9Z,12Z)-8-hydroperoxyoctadeca-9,12-dienoate (within the N-terminal heme peroxidase domain), which is subsequently isomerized to (5S,8R,9Z,12Z)-5,8-dihydroxyoctadeca-9,12-dienoate (within the C-terminal P450 heme thiolate domain). Oxidized unsaturated fatty acids, so-called oxylipins, derived from endogenous fatty acids, influence the development of the asexual conidiophores and sexual cleistothecia and regulate the secondary metabolism. These substances were collectively named psi factors and are primarily a mixture of hydroxylated oleic, linoleic and alpha-linolenic acids. They are termed psi-beta, psi-alpha, and psi-gamma, respectively (By similarity).</text>
</comment>
<comment type="catalytic activity">
    <reaction>
        <text>(9Z,12Z)-octadecadienoate + O2 = (8R,9Z,12Z)-8-hydroperoxyoctadeca-9,12-dienoate</text>
        <dbReference type="Rhea" id="RHEA:25395"/>
        <dbReference type="ChEBI" id="CHEBI:15379"/>
        <dbReference type="ChEBI" id="CHEBI:30245"/>
        <dbReference type="ChEBI" id="CHEBI:58659"/>
        <dbReference type="EC" id="1.13.11.60"/>
    </reaction>
</comment>
<comment type="catalytic activity">
    <reaction>
        <text>(8R,9Z,12Z)-8-hydroperoxyoctadeca-9,12-dienoate = (5S,8R,9Z,12Z)-5,8-dihydroxyoctadeca-9,12-dienoate</text>
        <dbReference type="Rhea" id="RHEA:31579"/>
        <dbReference type="ChEBI" id="CHEBI:58659"/>
        <dbReference type="ChEBI" id="CHEBI:63217"/>
        <dbReference type="EC" id="5.4.4.5"/>
    </reaction>
</comment>
<comment type="cofactor">
    <cofactor evidence="1">
        <name>heme b</name>
        <dbReference type="ChEBI" id="CHEBI:60344"/>
    </cofactor>
</comment>
<comment type="subunit">
    <text evidence="1">Homotetramer.</text>
</comment>
<comment type="similarity">
    <text evidence="3">Belongs to the peroxidase family.</text>
</comment>
<feature type="chain" id="PRO_0000416226" description="Psi-producing oxygenase A">
    <location>
        <begin position="1"/>
        <end position="1081"/>
    </location>
</feature>
<feature type="region of interest" description="Linoleate 8R-lipoxygenase" evidence="1">
    <location>
        <begin position="105"/>
        <end position="446"/>
    </location>
</feature>
<feature type="region of interest" description="9,12-octadecadienoate 8-hydroperoxide 8R-isomerase" evidence="1">
    <location>
        <begin position="654"/>
        <end position="1081"/>
    </location>
</feature>
<feature type="active site" evidence="2">
    <location>
        <position position="374"/>
    </location>
</feature>
<feature type="binding site" description="axial binding residue" evidence="3">
    <location>
        <position position="202"/>
    </location>
    <ligand>
        <name>heme b</name>
        <dbReference type="ChEBI" id="CHEBI:60344"/>
    </ligand>
    <ligandPart>
        <name>Fe</name>
        <dbReference type="ChEBI" id="CHEBI:18248"/>
    </ligandPart>
</feature>
<feature type="binding site" description="axial binding residue" evidence="3">
    <location>
        <position position="377"/>
    </location>
    <ligand>
        <name>heme b</name>
        <dbReference type="ChEBI" id="CHEBI:60344"/>
    </ligand>
    <ligandPart>
        <name>Fe</name>
        <dbReference type="ChEBI" id="CHEBI:18248"/>
    </ligandPart>
</feature>
<proteinExistence type="inferred from homology"/>
<dbReference type="EC" id="1.13.11.60"/>
<dbReference type="EC" id="5.4.4.5"/>
<dbReference type="EMBL" id="BN001307">
    <property type="protein sequence ID" value="CBF85912.1"/>
    <property type="molecule type" value="Genomic_DNA"/>
</dbReference>
<dbReference type="EMBL" id="AACD01000029">
    <property type="protein sequence ID" value="EAA65132.1"/>
    <property type="molecule type" value="Genomic_DNA"/>
</dbReference>
<dbReference type="RefSeq" id="XP_659571.1">
    <property type="nucleotide sequence ID" value="XM_654479.1"/>
</dbReference>
<dbReference type="SMR" id="G5EB19"/>
<dbReference type="STRING" id="227321.G5EB19"/>
<dbReference type="EnsemblFungi" id="CBF85912">
    <property type="protein sequence ID" value="CBF85912"/>
    <property type="gene ID" value="ANIA_01967"/>
</dbReference>
<dbReference type="KEGG" id="ani:ANIA_01967"/>
<dbReference type="VEuPathDB" id="FungiDB:AN1967"/>
<dbReference type="eggNOG" id="KOG2408">
    <property type="taxonomic scope" value="Eukaryota"/>
</dbReference>
<dbReference type="HOGENOM" id="CLU_002329_1_0_1"/>
<dbReference type="InParanoid" id="G5EB19"/>
<dbReference type="OMA" id="KIQWDGD"/>
<dbReference type="OrthoDB" id="823504at2759"/>
<dbReference type="Proteomes" id="UP000000560">
    <property type="component" value="Chromosome VII"/>
</dbReference>
<dbReference type="GO" id="GO:0051213">
    <property type="term" value="F:dioxygenase activity"/>
    <property type="evidence" value="ECO:0000314"/>
    <property type="project" value="AspGD"/>
</dbReference>
<dbReference type="GO" id="GO:0047888">
    <property type="term" value="F:fatty acid peroxidase activity"/>
    <property type="evidence" value="ECO:0000314"/>
    <property type="project" value="AspGD"/>
</dbReference>
<dbReference type="GO" id="GO:0020037">
    <property type="term" value="F:heme binding"/>
    <property type="evidence" value="ECO:0007669"/>
    <property type="project" value="InterPro"/>
</dbReference>
<dbReference type="GO" id="GO:0005506">
    <property type="term" value="F:iron ion binding"/>
    <property type="evidence" value="ECO:0007669"/>
    <property type="project" value="InterPro"/>
</dbReference>
<dbReference type="GO" id="GO:0016853">
    <property type="term" value="F:isomerase activity"/>
    <property type="evidence" value="ECO:0007669"/>
    <property type="project" value="UniProtKB-KW"/>
</dbReference>
<dbReference type="GO" id="GO:0052878">
    <property type="term" value="F:linoleate 8R-lipoxygenase activity"/>
    <property type="evidence" value="ECO:0000314"/>
    <property type="project" value="AspGD"/>
</dbReference>
<dbReference type="GO" id="GO:0004497">
    <property type="term" value="F:monooxygenase activity"/>
    <property type="evidence" value="ECO:0007669"/>
    <property type="project" value="InterPro"/>
</dbReference>
<dbReference type="GO" id="GO:0016705">
    <property type="term" value="F:oxidoreductase activity, acting on paired donors, with incorporation or reduction of molecular oxygen"/>
    <property type="evidence" value="ECO:0007669"/>
    <property type="project" value="InterPro"/>
</dbReference>
<dbReference type="GO" id="GO:0043936">
    <property type="term" value="P:asexual sporulation resulting in formation of a cellular spore"/>
    <property type="evidence" value="ECO:0000315"/>
    <property type="project" value="AspGD"/>
</dbReference>
<dbReference type="GO" id="GO:0006631">
    <property type="term" value="P:fatty acid metabolic process"/>
    <property type="evidence" value="ECO:0000314"/>
    <property type="project" value="AspGD"/>
</dbReference>
<dbReference type="GO" id="GO:0043942">
    <property type="term" value="P:negative regulation of sexual sporulation resulting in formation of a cellular spore"/>
    <property type="evidence" value="ECO:0000315"/>
    <property type="project" value="AspGD"/>
</dbReference>
<dbReference type="GO" id="GO:0031408">
    <property type="term" value="P:oxylipin biosynthetic process"/>
    <property type="evidence" value="ECO:0000314"/>
    <property type="project" value="AspGD"/>
</dbReference>
<dbReference type="GO" id="GO:0042316">
    <property type="term" value="P:penicillin metabolic process"/>
    <property type="evidence" value="ECO:0000315"/>
    <property type="project" value="AspGD"/>
</dbReference>
<dbReference type="GO" id="GO:0043945">
    <property type="term" value="P:positive regulation of asexual sporulation resulting in formation of a cellular spore"/>
    <property type="evidence" value="ECO:0000315"/>
    <property type="project" value="AspGD"/>
</dbReference>
<dbReference type="GO" id="GO:0006979">
    <property type="term" value="P:response to oxidative stress"/>
    <property type="evidence" value="ECO:0007669"/>
    <property type="project" value="InterPro"/>
</dbReference>
<dbReference type="GO" id="GO:0043935">
    <property type="term" value="P:sexual sporulation resulting in formation of a cellular spore"/>
    <property type="evidence" value="ECO:0000315"/>
    <property type="project" value="AspGD"/>
</dbReference>
<dbReference type="GO" id="GO:0045461">
    <property type="term" value="P:sterigmatocystin biosynthetic process"/>
    <property type="evidence" value="ECO:0000315"/>
    <property type="project" value="AspGD"/>
</dbReference>
<dbReference type="CDD" id="cd20612">
    <property type="entry name" value="CYP_LDS-like_C"/>
    <property type="match status" value="1"/>
</dbReference>
<dbReference type="CDD" id="cd09817">
    <property type="entry name" value="linoleate_diol_synthase_like"/>
    <property type="match status" value="1"/>
</dbReference>
<dbReference type="FunFam" id="1.10.630.10:FF:000058">
    <property type="entry name" value="Fatty acid oxygenase"/>
    <property type="match status" value="1"/>
</dbReference>
<dbReference type="FunFam" id="1.10.640.10:FF:000005">
    <property type="entry name" value="Fatty acid oxygenase"/>
    <property type="match status" value="1"/>
</dbReference>
<dbReference type="Gene3D" id="1.10.630.10">
    <property type="entry name" value="Cytochrome P450"/>
    <property type="match status" value="1"/>
</dbReference>
<dbReference type="Gene3D" id="1.10.640.10">
    <property type="entry name" value="Haem peroxidase domain superfamily, animal type"/>
    <property type="match status" value="1"/>
</dbReference>
<dbReference type="InterPro" id="IPR001128">
    <property type="entry name" value="Cyt_P450"/>
</dbReference>
<dbReference type="InterPro" id="IPR017972">
    <property type="entry name" value="Cyt_P450_CS"/>
</dbReference>
<dbReference type="InterPro" id="IPR036396">
    <property type="entry name" value="Cyt_P450_sf"/>
</dbReference>
<dbReference type="InterPro" id="IPR019791">
    <property type="entry name" value="Haem_peroxidase_animal"/>
</dbReference>
<dbReference type="InterPro" id="IPR010255">
    <property type="entry name" value="Haem_peroxidase_sf"/>
</dbReference>
<dbReference type="InterPro" id="IPR037120">
    <property type="entry name" value="Haem_peroxidase_sf_animal"/>
</dbReference>
<dbReference type="InterPro" id="IPR050783">
    <property type="entry name" value="Oxylipin_biosynth_metab"/>
</dbReference>
<dbReference type="InterPro" id="IPR034812">
    <property type="entry name" value="Ppo-like_N"/>
</dbReference>
<dbReference type="PANTHER" id="PTHR11903">
    <property type="entry name" value="PROSTAGLANDIN G/H SYNTHASE"/>
    <property type="match status" value="1"/>
</dbReference>
<dbReference type="PANTHER" id="PTHR11903:SF37">
    <property type="entry name" value="PSI-PRODUCING OXYGENASE A"/>
    <property type="match status" value="1"/>
</dbReference>
<dbReference type="Pfam" id="PF03098">
    <property type="entry name" value="An_peroxidase"/>
    <property type="match status" value="2"/>
</dbReference>
<dbReference type="Pfam" id="PF00067">
    <property type="entry name" value="p450"/>
    <property type="match status" value="1"/>
</dbReference>
<dbReference type="SUPFAM" id="SSF48264">
    <property type="entry name" value="Cytochrome P450"/>
    <property type="match status" value="1"/>
</dbReference>
<dbReference type="SUPFAM" id="SSF48113">
    <property type="entry name" value="Heme-dependent peroxidases"/>
    <property type="match status" value="1"/>
</dbReference>
<dbReference type="PROSITE" id="PS00086">
    <property type="entry name" value="CYTOCHROME_P450"/>
    <property type="match status" value="1"/>
</dbReference>
<dbReference type="PROSITE" id="PS50292">
    <property type="entry name" value="PEROXIDASE_3"/>
    <property type="match status" value="1"/>
</dbReference>
<name>PPOA_EMENI</name>
<reference key="1">
    <citation type="journal article" date="2005" name="Nature">
        <title>Sequencing of Aspergillus nidulans and comparative analysis with A. fumigatus and A. oryzae.</title>
        <authorList>
            <person name="Galagan J.E."/>
            <person name="Calvo S.E."/>
            <person name="Cuomo C."/>
            <person name="Ma L.-J."/>
            <person name="Wortman J.R."/>
            <person name="Batzoglou S."/>
            <person name="Lee S.-I."/>
            <person name="Bastuerkmen M."/>
            <person name="Spevak C.C."/>
            <person name="Clutterbuck J."/>
            <person name="Kapitonov V."/>
            <person name="Jurka J."/>
            <person name="Scazzocchio C."/>
            <person name="Farman M.L."/>
            <person name="Butler J."/>
            <person name="Purcell S."/>
            <person name="Harris S."/>
            <person name="Braus G.H."/>
            <person name="Draht O."/>
            <person name="Busch S."/>
            <person name="D'Enfert C."/>
            <person name="Bouchier C."/>
            <person name="Goldman G.H."/>
            <person name="Bell-Pedersen D."/>
            <person name="Griffiths-Jones S."/>
            <person name="Doonan J.H."/>
            <person name="Yu J."/>
            <person name="Vienken K."/>
            <person name="Pain A."/>
            <person name="Freitag M."/>
            <person name="Selker E.U."/>
            <person name="Archer D.B."/>
            <person name="Penalva M.A."/>
            <person name="Oakley B.R."/>
            <person name="Momany M."/>
            <person name="Tanaka T."/>
            <person name="Kumagai T."/>
            <person name="Asai K."/>
            <person name="Machida M."/>
            <person name="Nierman W.C."/>
            <person name="Denning D.W."/>
            <person name="Caddick M.X."/>
            <person name="Hynes M."/>
            <person name="Paoletti M."/>
            <person name="Fischer R."/>
            <person name="Miller B.L."/>
            <person name="Dyer P.S."/>
            <person name="Sachs M.S."/>
            <person name="Osmani S.A."/>
            <person name="Birren B.W."/>
        </authorList>
    </citation>
    <scope>NUCLEOTIDE SEQUENCE [LARGE SCALE GENOMIC DNA]</scope>
    <source>
        <strain>FGSC A4 / ATCC 38163 / CBS 112.46 / NRRL 194 / M139</strain>
    </source>
</reference>
<reference key="2">
    <citation type="journal article" date="2009" name="Fungal Genet. Biol.">
        <title>The 2008 update of the Aspergillus nidulans genome annotation: a community effort.</title>
        <authorList>
            <person name="Wortman J.R."/>
            <person name="Gilsenan J.M."/>
            <person name="Joardar V."/>
            <person name="Deegan J."/>
            <person name="Clutterbuck J."/>
            <person name="Andersen M.R."/>
            <person name="Archer D."/>
            <person name="Bencina M."/>
            <person name="Braus G."/>
            <person name="Coutinho P."/>
            <person name="von Dohren H."/>
            <person name="Doonan J."/>
            <person name="Driessen A.J."/>
            <person name="Durek P."/>
            <person name="Espeso E."/>
            <person name="Fekete E."/>
            <person name="Flipphi M."/>
            <person name="Estrada C.G."/>
            <person name="Geysens S."/>
            <person name="Goldman G."/>
            <person name="de Groot P.W."/>
            <person name="Hansen K."/>
            <person name="Harris S.D."/>
            <person name="Heinekamp T."/>
            <person name="Helmstaedt K."/>
            <person name="Henrissat B."/>
            <person name="Hofmann G."/>
            <person name="Homan T."/>
            <person name="Horio T."/>
            <person name="Horiuchi H."/>
            <person name="James S."/>
            <person name="Jones M."/>
            <person name="Karaffa L."/>
            <person name="Karanyi Z."/>
            <person name="Kato M."/>
            <person name="Keller N."/>
            <person name="Kelly D.E."/>
            <person name="Kiel J.A."/>
            <person name="Kim J.M."/>
            <person name="van der Klei I.J."/>
            <person name="Klis F.M."/>
            <person name="Kovalchuk A."/>
            <person name="Krasevec N."/>
            <person name="Kubicek C.P."/>
            <person name="Liu B."/>
            <person name="Maccabe A."/>
            <person name="Meyer V."/>
            <person name="Mirabito P."/>
            <person name="Miskei M."/>
            <person name="Mos M."/>
            <person name="Mullins J."/>
            <person name="Nelson D.R."/>
            <person name="Nielsen J."/>
            <person name="Oakley B.R."/>
            <person name="Osmani S.A."/>
            <person name="Pakula T."/>
            <person name="Paszewski A."/>
            <person name="Paulsen I."/>
            <person name="Pilsyk S."/>
            <person name="Pocsi I."/>
            <person name="Punt P.J."/>
            <person name="Ram A.F."/>
            <person name="Ren Q."/>
            <person name="Robellet X."/>
            <person name="Robson G."/>
            <person name="Seiboth B."/>
            <person name="van Solingen P."/>
            <person name="Specht T."/>
            <person name="Sun J."/>
            <person name="Taheri-Talesh N."/>
            <person name="Takeshita N."/>
            <person name="Ussery D."/>
            <person name="vanKuyk P.A."/>
            <person name="Visser H."/>
            <person name="van de Vondervoort P.J."/>
            <person name="de Vries R.P."/>
            <person name="Walton J."/>
            <person name="Xiang X."/>
            <person name="Xiong Y."/>
            <person name="Zeng A.P."/>
            <person name="Brandt B.W."/>
            <person name="Cornell M.J."/>
            <person name="van den Hondel C.A."/>
            <person name="Visser J."/>
            <person name="Oliver S.G."/>
            <person name="Turner G."/>
        </authorList>
    </citation>
    <scope>GENOME REANNOTATION</scope>
    <source>
        <strain>FGSC A4 / ATCC 38163 / CBS 112.46 / NRRL 194 / M139</strain>
    </source>
</reference>
<evidence type="ECO:0000250" key="1"/>
<evidence type="ECO:0000255" key="2"/>
<evidence type="ECO:0000255" key="3">
    <source>
        <dbReference type="PROSITE-ProRule" id="PRU00298"/>
    </source>
</evidence>
<organism>
    <name type="scientific">Emericella nidulans (strain FGSC A4 / ATCC 38163 / CBS 112.46 / NRRL 194 / M139)</name>
    <name type="common">Aspergillus nidulans</name>
    <dbReference type="NCBI Taxonomy" id="227321"/>
    <lineage>
        <taxon>Eukaryota</taxon>
        <taxon>Fungi</taxon>
        <taxon>Dikarya</taxon>
        <taxon>Ascomycota</taxon>
        <taxon>Pezizomycotina</taxon>
        <taxon>Eurotiomycetes</taxon>
        <taxon>Eurotiomycetidae</taxon>
        <taxon>Eurotiales</taxon>
        <taxon>Aspergillaceae</taxon>
        <taxon>Aspergillus</taxon>
        <taxon>Aspergillus subgen. Nidulantes</taxon>
    </lineage>
</organism>
<sequence>MGEDKETNILAGLGNTISQVENVVAASLRPLPTATGDGTYVAESTQTGLAKDLSHVDLKDVRTLAEVVKSAATGEPVDDKQYIMERVIQLAAGLPSTSRNAAELTKSFLNMLWNDLEHPPVSYLGADSMHRKADGSGNNRFWPQLGAAGSAYARSVRPKTMQSPSLPDPETIFDCLLRRKEYREHPNKISSVLFYLASIIIHDLFQTDPKDNSVSKTSSYLDLSPLYGNNQDEQNLVRTFKDGKLKPDCFATKRVLGFPPGVGVLLIMFNRFHNYVVDQLAAINECGRFTKPDESNVDEYAKYDNNLFQTGRLVTCGLYANIILKDYVRTILNINRTDSTWSLDPRMEMKDGLLGEAAAMATGNQVSAEFNVVYRWHACISKRDEKWTEDFHREIMPGVDPSTLSMQDFVAGLGRWQAGLPQEPLERPFSGLQRKPDGAFNDDDLVNLFEKSVEDCAGAFGASHVPAIFKSVEALGIMQARRWNLGTLNEFRQYFNLAPHKTFEDINSDPYIADQLKRLYDHPDLVEIYPGVVVEEAKDSMVPGSGLCTNFTISRAILSDAVALVRGDRFYTVDYTPKHLTNWAYNEIQPNNAVDQGQVFYKLVLRAFPNHFDGNSIYAHFPLVVPSENEKILKSLGVAEKYSWEKPSRISHPIFISSHAACMSILENQETFKVTWGRKIEFLMQRDKHQYGKDFMLSGDRPPNAASRKMMGSALYRDEWEAEVKNFYEQTTLKLLHKNSYKLAGVNQVDIVRDVANLAQVHFCSSVFSLPLKTDSNPRGIFAESELYKIMAAVFTAIFYDADIGKSFELNQAARTVTQQLGQLTMANVEIIAKTGLIANLVNRLHRRDVLSEYGIHMIQRLLDSGLPATEIVWTHILPTAGGMVANQAQLFSQCLDYYLSEEGSGHLPEINRLAKENTPEADELLTRYFMEGARLRSSVALPRVAAQPTVVEDNGEKLTIKAGQVVMCNLVSACMDPTAFPDPEKVKLDRDMNLYAHFGFGPHKCLGLDLCKTGLSTMLKVLGRLDNLRRAPGAQGQLKKLSGPGGIAKYMNEDQSGFTPFPSTMKIQWDGELPQLKEDF</sequence>
<accession>G5EB19</accession>
<accession>C8VL39</accession>
<keyword id="KW-0223">Dioxygenase</keyword>
<keyword id="KW-0349">Heme</keyword>
<keyword id="KW-0408">Iron</keyword>
<keyword id="KW-0413">Isomerase</keyword>
<keyword id="KW-0479">Metal-binding</keyword>
<keyword id="KW-0511">Multifunctional enzyme</keyword>
<keyword id="KW-0560">Oxidoreductase</keyword>
<keyword id="KW-0575">Peroxidase</keyword>
<keyword id="KW-1185">Reference proteome</keyword>
<gene>
    <name type="primary">ppoA</name>
    <name type="ORF">AN1967</name>
</gene>